<dbReference type="EMBL" id="CP000395">
    <property type="protein sequence ID" value="ABH01789.1"/>
    <property type="molecule type" value="Genomic_DNA"/>
</dbReference>
<dbReference type="EMBL" id="CP002933">
    <property type="protein sequence ID" value="AEL69742.1"/>
    <property type="molecule type" value="Genomic_DNA"/>
</dbReference>
<dbReference type="RefSeq" id="WP_011601065.1">
    <property type="nucleotide sequence ID" value="NC_008277.1"/>
</dbReference>
<dbReference type="SMR" id="Q0SMY9"/>
<dbReference type="STRING" id="29518.BLA32_01670"/>
<dbReference type="KEGG" id="baf:BAPKO_0546"/>
<dbReference type="KEGG" id="bafz:BafPKo_0534"/>
<dbReference type="PATRIC" id="fig|390236.22.peg.515"/>
<dbReference type="eggNOG" id="COG0576">
    <property type="taxonomic scope" value="Bacteria"/>
</dbReference>
<dbReference type="HOGENOM" id="CLU_057217_6_3_12"/>
<dbReference type="OrthoDB" id="9812586at2"/>
<dbReference type="Proteomes" id="UP000005216">
    <property type="component" value="Chromosome"/>
</dbReference>
<dbReference type="GO" id="GO:0005737">
    <property type="term" value="C:cytoplasm"/>
    <property type="evidence" value="ECO:0007669"/>
    <property type="project" value="UniProtKB-SubCell"/>
</dbReference>
<dbReference type="GO" id="GO:0000774">
    <property type="term" value="F:adenyl-nucleotide exchange factor activity"/>
    <property type="evidence" value="ECO:0007669"/>
    <property type="project" value="InterPro"/>
</dbReference>
<dbReference type="GO" id="GO:0042803">
    <property type="term" value="F:protein homodimerization activity"/>
    <property type="evidence" value="ECO:0007669"/>
    <property type="project" value="InterPro"/>
</dbReference>
<dbReference type="GO" id="GO:0051087">
    <property type="term" value="F:protein-folding chaperone binding"/>
    <property type="evidence" value="ECO:0007669"/>
    <property type="project" value="InterPro"/>
</dbReference>
<dbReference type="GO" id="GO:0051082">
    <property type="term" value="F:unfolded protein binding"/>
    <property type="evidence" value="ECO:0007669"/>
    <property type="project" value="TreeGrafter"/>
</dbReference>
<dbReference type="GO" id="GO:0006457">
    <property type="term" value="P:protein folding"/>
    <property type="evidence" value="ECO:0007669"/>
    <property type="project" value="InterPro"/>
</dbReference>
<dbReference type="CDD" id="cd00446">
    <property type="entry name" value="GrpE"/>
    <property type="match status" value="1"/>
</dbReference>
<dbReference type="FunFam" id="2.30.22.10:FF:000001">
    <property type="entry name" value="Protein GrpE"/>
    <property type="match status" value="1"/>
</dbReference>
<dbReference type="FunFam" id="3.90.20.20:FF:000022">
    <property type="entry name" value="Protein GrpE"/>
    <property type="match status" value="1"/>
</dbReference>
<dbReference type="Gene3D" id="3.90.20.20">
    <property type="match status" value="1"/>
</dbReference>
<dbReference type="Gene3D" id="2.30.22.10">
    <property type="entry name" value="Head domain of nucleotide exchange factor GrpE"/>
    <property type="match status" value="1"/>
</dbReference>
<dbReference type="HAMAP" id="MF_01151">
    <property type="entry name" value="GrpE"/>
    <property type="match status" value="1"/>
</dbReference>
<dbReference type="InterPro" id="IPR000740">
    <property type="entry name" value="GrpE"/>
</dbReference>
<dbReference type="InterPro" id="IPR013805">
    <property type="entry name" value="GrpE_coiled_coil"/>
</dbReference>
<dbReference type="InterPro" id="IPR009012">
    <property type="entry name" value="GrpE_head"/>
</dbReference>
<dbReference type="NCBIfam" id="NF010738">
    <property type="entry name" value="PRK14140.1"/>
    <property type="match status" value="1"/>
</dbReference>
<dbReference type="PANTHER" id="PTHR21237">
    <property type="entry name" value="GRPE PROTEIN"/>
    <property type="match status" value="1"/>
</dbReference>
<dbReference type="PANTHER" id="PTHR21237:SF23">
    <property type="entry name" value="GRPE PROTEIN HOMOLOG, MITOCHONDRIAL"/>
    <property type="match status" value="1"/>
</dbReference>
<dbReference type="Pfam" id="PF01025">
    <property type="entry name" value="GrpE"/>
    <property type="match status" value="1"/>
</dbReference>
<dbReference type="PRINTS" id="PR00773">
    <property type="entry name" value="GRPEPROTEIN"/>
</dbReference>
<dbReference type="SUPFAM" id="SSF58014">
    <property type="entry name" value="Coiled-coil domain of nucleotide exchange factor GrpE"/>
    <property type="match status" value="1"/>
</dbReference>
<dbReference type="SUPFAM" id="SSF51064">
    <property type="entry name" value="Head domain of nucleotide exchange factor GrpE"/>
    <property type="match status" value="1"/>
</dbReference>
<dbReference type="PROSITE" id="PS01071">
    <property type="entry name" value="GRPE"/>
    <property type="match status" value="1"/>
</dbReference>
<reference key="1">
    <citation type="journal article" date="2006" name="BMC Genomics">
        <title>Comparative genome analysis: selection pressure on the Borrelia vls cassettes is essential for infectivity.</title>
        <authorList>
            <person name="Gloeckner G."/>
            <person name="Schulte-Spechtel U."/>
            <person name="Schilhabel M."/>
            <person name="Felder M."/>
            <person name="Suehnel J."/>
            <person name="Wilske B."/>
            <person name="Platzer M."/>
        </authorList>
    </citation>
    <scope>NUCLEOTIDE SEQUENCE [LARGE SCALE GENOMIC DNA]</scope>
    <source>
        <strain>PKo</strain>
    </source>
</reference>
<reference key="2">
    <citation type="journal article" date="2011" name="J. Bacteriol.">
        <title>Whole-genome sequences of two Borrelia afzelii and two Borrelia garinii Lyme disease agent isolates.</title>
        <authorList>
            <person name="Casjens S.R."/>
            <person name="Mongodin E.F."/>
            <person name="Qiu W.G."/>
            <person name="Dunn J.J."/>
            <person name="Luft B.J."/>
            <person name="Fraser-Liggett C.M."/>
            <person name="Schutzer S.E."/>
        </authorList>
    </citation>
    <scope>NUCLEOTIDE SEQUENCE [LARGE SCALE GENOMIC DNA]</scope>
    <source>
        <strain>PKo</strain>
    </source>
</reference>
<keyword id="KW-0143">Chaperone</keyword>
<keyword id="KW-0963">Cytoplasm</keyword>
<keyword id="KW-0346">Stress response</keyword>
<name>GRPE_BORAP</name>
<feature type="chain" id="PRO_1000053546" description="Protein GrpE">
    <location>
        <begin position="1"/>
        <end position="187"/>
    </location>
</feature>
<feature type="region of interest" description="Disordered" evidence="2">
    <location>
        <begin position="1"/>
        <end position="30"/>
    </location>
</feature>
<accession>Q0SMY9</accession>
<accession>G0IQ72</accession>
<protein>
    <recommendedName>
        <fullName evidence="1">Protein GrpE</fullName>
    </recommendedName>
    <alternativeName>
        <fullName evidence="1">HSP-70 cofactor</fullName>
    </alternativeName>
</protein>
<proteinExistence type="inferred from homology"/>
<organism>
    <name type="scientific">Borreliella afzelii (strain PKo)</name>
    <name type="common">Borrelia afzelii</name>
    <dbReference type="NCBI Taxonomy" id="390236"/>
    <lineage>
        <taxon>Bacteria</taxon>
        <taxon>Pseudomonadati</taxon>
        <taxon>Spirochaetota</taxon>
        <taxon>Spirochaetia</taxon>
        <taxon>Spirochaetales</taxon>
        <taxon>Borreliaceae</taxon>
        <taxon>Borreliella</taxon>
    </lineage>
</organism>
<comment type="function">
    <text evidence="1">Participates actively in the response to hyperosmotic and heat shock by preventing the aggregation of stress-denatured proteins, in association with DnaK and GrpE. It is the nucleotide exchange factor for DnaK and may function as a thermosensor. Unfolded proteins bind initially to DnaJ; upon interaction with the DnaJ-bound protein, DnaK hydrolyzes its bound ATP, resulting in the formation of a stable complex. GrpE releases ADP from DnaK; ATP binding to DnaK triggers the release of the substrate protein, thus completing the reaction cycle. Several rounds of ATP-dependent interactions between DnaJ, DnaK and GrpE are required for fully efficient folding.</text>
</comment>
<comment type="subunit">
    <text evidence="1">Homodimer.</text>
</comment>
<comment type="subcellular location">
    <subcellularLocation>
        <location evidence="1">Cytoplasm</location>
    </subcellularLocation>
</comment>
<comment type="similarity">
    <text evidence="1">Belongs to the GrpE family.</text>
</comment>
<evidence type="ECO:0000255" key="1">
    <source>
        <dbReference type="HAMAP-Rule" id="MF_01151"/>
    </source>
</evidence>
<evidence type="ECO:0000256" key="2">
    <source>
        <dbReference type="SAM" id="MobiDB-lite"/>
    </source>
</evidence>
<sequence length="187" mass="22102">MEKKETKNETEKTNKQDNKNTKSQKKENLNLVNSDKKITELENEISNLKDLYLRKQAEFENFRKRLEKEKDNFVKFANETIMKDVVNFLDNLERAINSSKKSKDFDNLLTGISMIENEILSIFDKKYNLKKFGENGENFDPSRHEAISIEEKEDFKNPEIVEVYQKGYCYNDRILRTAKVKVAQSKN</sequence>
<gene>
    <name evidence="1" type="primary">grpE</name>
    <name type="ordered locus">BAPKO_0546</name>
    <name type="ordered locus">BafPKo_0534</name>
</gene>